<accession>Q9I923</accession>
<comment type="function">
    <text evidence="1">Gluconolactonase with low activity towards other sugar lactones, including gulonolactone and galactonolactone. Catalyzes a key step in ascorbic acid (vitamin C) biosynthesis. Can also hydrolyze diisopropyl phosphorofluoridate and phenylacetate (in vitro). Calcium-binding protein. Modulates Ca(2+) signaling, and Ca(2+)-dependent cellular processes and enzyme activities (By similarity).</text>
</comment>
<comment type="catalytic activity">
    <reaction>
        <text>D-glucono-1,5-lactone + H2O = D-gluconate + H(+)</text>
        <dbReference type="Rhea" id="RHEA:10440"/>
        <dbReference type="ChEBI" id="CHEBI:15377"/>
        <dbReference type="ChEBI" id="CHEBI:15378"/>
        <dbReference type="ChEBI" id="CHEBI:16217"/>
        <dbReference type="ChEBI" id="CHEBI:18391"/>
        <dbReference type="EC" id="3.1.1.17"/>
    </reaction>
</comment>
<comment type="cofactor">
    <cofactor evidence="1">
        <name>Zn(2+)</name>
        <dbReference type="ChEBI" id="CHEBI:29105"/>
    </cofactor>
    <cofactor evidence="1">
        <name>Mn(2+)</name>
        <dbReference type="ChEBI" id="CHEBI:29035"/>
    </cofactor>
    <cofactor evidence="1">
        <name>Ca(2+)</name>
        <dbReference type="ChEBI" id="CHEBI:29108"/>
    </cofactor>
    <cofactor evidence="1">
        <name>Mg(2+)</name>
        <dbReference type="ChEBI" id="CHEBI:18420"/>
    </cofactor>
    <text evidence="1">Binds 1 divalent metal cation per subunit. Most active with Zn(2+) and Mn(2+) ions. The physiological cofactor is most likely Ca(2+) or Mg(2+).</text>
</comment>
<comment type="pathway">
    <text>Cofactor biosynthesis; L-ascorbate biosynthesis via UDP-alpha-D-glucuronate pathway; L-ascorbate from UDP-alpha-D-glucuronate: step 3/4.</text>
</comment>
<comment type="subcellular location">
    <subcellularLocation>
        <location evidence="2">Cytoplasm</location>
    </subcellularLocation>
</comment>
<comment type="similarity">
    <text evidence="2">Belongs to the SMP-30/CGR1 family.</text>
</comment>
<dbReference type="EC" id="3.1.1.17"/>
<dbReference type="EMBL" id="AB037935">
    <property type="protein sequence ID" value="BAA90693.1"/>
    <property type="molecule type" value="mRNA"/>
</dbReference>
<dbReference type="RefSeq" id="NP_990060.1">
    <property type="nucleotide sequence ID" value="NM_204729.1"/>
</dbReference>
<dbReference type="SMR" id="Q9I923"/>
<dbReference type="FunCoup" id="Q9I923">
    <property type="interactions" value="109"/>
</dbReference>
<dbReference type="STRING" id="9031.ENSGALP00000068205"/>
<dbReference type="PaxDb" id="9031-ENSGALP00000026937"/>
<dbReference type="GeneID" id="395480"/>
<dbReference type="KEGG" id="gga:395480"/>
<dbReference type="CTD" id="9104"/>
<dbReference type="VEuPathDB" id="HostDB:geneid_395480"/>
<dbReference type="eggNOG" id="KOG4499">
    <property type="taxonomic scope" value="Eukaryota"/>
</dbReference>
<dbReference type="InParanoid" id="Q9I923"/>
<dbReference type="OrthoDB" id="423498at2759"/>
<dbReference type="PhylomeDB" id="Q9I923"/>
<dbReference type="UniPathway" id="UPA00991">
    <property type="reaction ID" value="UER00938"/>
</dbReference>
<dbReference type="PRO" id="PR:Q9I923"/>
<dbReference type="Proteomes" id="UP000000539">
    <property type="component" value="Unassembled WGS sequence"/>
</dbReference>
<dbReference type="GO" id="GO:0005737">
    <property type="term" value="C:cytoplasm"/>
    <property type="evidence" value="ECO:0000250"/>
    <property type="project" value="UniProtKB"/>
</dbReference>
<dbReference type="GO" id="GO:0005634">
    <property type="term" value="C:nucleus"/>
    <property type="evidence" value="ECO:0000250"/>
    <property type="project" value="UniProtKB"/>
</dbReference>
<dbReference type="GO" id="GO:0005509">
    <property type="term" value="F:calcium ion binding"/>
    <property type="evidence" value="ECO:0000250"/>
    <property type="project" value="UniProtKB"/>
</dbReference>
<dbReference type="GO" id="GO:0030234">
    <property type="term" value="F:enzyme regulator activity"/>
    <property type="evidence" value="ECO:0007669"/>
    <property type="project" value="InterPro"/>
</dbReference>
<dbReference type="GO" id="GO:0004341">
    <property type="term" value="F:gluconolactonase activity"/>
    <property type="evidence" value="ECO:0000250"/>
    <property type="project" value="UniProtKB"/>
</dbReference>
<dbReference type="GO" id="GO:0008270">
    <property type="term" value="F:zinc ion binding"/>
    <property type="evidence" value="ECO:0000250"/>
    <property type="project" value="UniProtKB"/>
</dbReference>
<dbReference type="GO" id="GO:0006874">
    <property type="term" value="P:intracellular calcium ion homeostasis"/>
    <property type="evidence" value="ECO:0000250"/>
    <property type="project" value="UniProtKB"/>
</dbReference>
<dbReference type="GO" id="GO:0019853">
    <property type="term" value="P:L-ascorbic acid biosynthetic process"/>
    <property type="evidence" value="ECO:0000250"/>
    <property type="project" value="UniProtKB"/>
</dbReference>
<dbReference type="GO" id="GO:0032781">
    <property type="term" value="P:positive regulation of ATP-dependent activity"/>
    <property type="evidence" value="ECO:0000250"/>
    <property type="project" value="UniProtKB"/>
</dbReference>
<dbReference type="GO" id="GO:0050848">
    <property type="term" value="P:regulation of calcium-mediated signaling"/>
    <property type="evidence" value="ECO:0000250"/>
    <property type="project" value="UniProtKB"/>
</dbReference>
<dbReference type="FunFam" id="2.120.10.30:FF:000027">
    <property type="entry name" value="Regucalcin homologue"/>
    <property type="match status" value="1"/>
</dbReference>
<dbReference type="Gene3D" id="2.120.10.30">
    <property type="entry name" value="TolB, C-terminal domain"/>
    <property type="match status" value="1"/>
</dbReference>
<dbReference type="InterPro" id="IPR011042">
    <property type="entry name" value="6-blade_b-propeller_TolB-like"/>
</dbReference>
<dbReference type="InterPro" id="IPR008367">
    <property type="entry name" value="Regucalcin"/>
</dbReference>
<dbReference type="InterPro" id="IPR013658">
    <property type="entry name" value="SGL"/>
</dbReference>
<dbReference type="InterPro" id="IPR005511">
    <property type="entry name" value="SMP-30"/>
</dbReference>
<dbReference type="PANTHER" id="PTHR10907">
    <property type="entry name" value="REGUCALCIN"/>
    <property type="match status" value="1"/>
</dbReference>
<dbReference type="PANTHER" id="PTHR10907:SF54">
    <property type="entry name" value="REGUCALCIN"/>
    <property type="match status" value="1"/>
</dbReference>
<dbReference type="Pfam" id="PF08450">
    <property type="entry name" value="SGL"/>
    <property type="match status" value="1"/>
</dbReference>
<dbReference type="PRINTS" id="PR01791">
    <property type="entry name" value="REGUCALCIN"/>
</dbReference>
<dbReference type="PRINTS" id="PR01790">
    <property type="entry name" value="SMP30FAMILY"/>
</dbReference>
<dbReference type="SUPFAM" id="SSF63829">
    <property type="entry name" value="Calcium-dependent phosphotriesterase"/>
    <property type="match status" value="1"/>
</dbReference>
<proteinExistence type="evidence at transcript level"/>
<organism>
    <name type="scientific">Gallus gallus</name>
    <name type="common">Chicken</name>
    <dbReference type="NCBI Taxonomy" id="9031"/>
    <lineage>
        <taxon>Eukaryota</taxon>
        <taxon>Metazoa</taxon>
        <taxon>Chordata</taxon>
        <taxon>Craniata</taxon>
        <taxon>Vertebrata</taxon>
        <taxon>Euteleostomi</taxon>
        <taxon>Archelosauria</taxon>
        <taxon>Archosauria</taxon>
        <taxon>Dinosauria</taxon>
        <taxon>Saurischia</taxon>
        <taxon>Theropoda</taxon>
        <taxon>Coelurosauria</taxon>
        <taxon>Aves</taxon>
        <taxon>Neognathae</taxon>
        <taxon>Galloanserae</taxon>
        <taxon>Galliformes</taxon>
        <taxon>Phasianidae</taxon>
        <taxon>Phasianinae</taxon>
        <taxon>Gallus</taxon>
    </lineage>
</organism>
<gene>
    <name evidence="2" type="primary">RGN</name>
</gene>
<reference evidence="3" key="1">
    <citation type="journal article" date="2000" name="Int. J. Mol. Med.">
        <title>The gene of Ca2+-binding protein regucalcin is highly conserved in vertebrate species.</title>
        <authorList>
            <person name="Misawa H."/>
            <person name="Yamaguchi M."/>
        </authorList>
    </citation>
    <scope>NUCLEOTIDE SEQUENCE [MRNA]</scope>
    <source>
        <tissue evidence="3">Liver</tissue>
    </source>
</reference>
<evidence type="ECO:0000250" key="1"/>
<evidence type="ECO:0000250" key="2">
    <source>
        <dbReference type="UniProtKB" id="Q03336"/>
    </source>
</evidence>
<evidence type="ECO:0000312" key="3">
    <source>
        <dbReference type="EMBL" id="BAA90693.1"/>
    </source>
</evidence>
<protein>
    <recommendedName>
        <fullName>Regucalcin</fullName>
        <shortName>RC</shortName>
    </recommendedName>
    <alternativeName>
        <fullName>Gluconolactonase</fullName>
        <shortName>GNL</shortName>
        <ecNumber>3.1.1.17</ecNumber>
    </alternativeName>
</protein>
<name>RGN_CHICK</name>
<keyword id="KW-0060">Ascorbate biosynthesis</keyword>
<keyword id="KW-0106">Calcium</keyword>
<keyword id="KW-0963">Cytoplasm</keyword>
<keyword id="KW-0378">Hydrolase</keyword>
<keyword id="KW-0479">Metal-binding</keyword>
<keyword id="KW-1185">Reference proteome</keyword>
<sequence length="299" mass="33230">MSSVKIECVGSDRYRLGESPVWDEKENSLLCVDITGRKVCRWDAASGQVQALSVDAPVSSVALRKSGDYVITLGTRFAALKWKEQLVTTIAQVDRDKANNRFNDGKVDPAGRYFAGTMAEEIRPAVLERRQGSLYTLCPDHSVVKHFDQVDISNGLDWSLDHKTFFYIDSLSYSVDAFDYDLQTGKIGNRRSVYKLEKEESIPDGMCIDTEGKLWVACYDGGRVIRLDPETGKRIQTVKLPVDKTTSCCFGGKDYSEMYVTSASDGMDREWLSRQPQAGGVFKITGLGVKGIPPYPFAG</sequence>
<feature type="chain" id="PRO_0000287684" description="Regucalcin">
    <location>
        <begin position="1"/>
        <end position="299"/>
    </location>
</feature>
<feature type="active site" description="Proton donor/acceptor" evidence="1">
    <location>
        <position position="204"/>
    </location>
</feature>
<feature type="binding site" evidence="1">
    <location>
        <position position="18"/>
    </location>
    <ligand>
        <name>a divalent metal cation</name>
        <dbReference type="ChEBI" id="CHEBI:60240"/>
    </ligand>
</feature>
<feature type="binding site" evidence="1">
    <location>
        <position position="101"/>
    </location>
    <ligand>
        <name>substrate</name>
    </ligand>
</feature>
<feature type="binding site" evidence="1">
    <location>
        <position position="103"/>
    </location>
    <ligand>
        <name>substrate</name>
    </ligand>
</feature>
<feature type="binding site" evidence="1">
    <location>
        <position position="121"/>
    </location>
    <ligand>
        <name>substrate</name>
    </ligand>
</feature>
<feature type="binding site" evidence="1">
    <location>
        <position position="154"/>
    </location>
    <ligand>
        <name>a divalent metal cation</name>
        <dbReference type="ChEBI" id="CHEBI:60240"/>
    </ligand>
</feature>
<feature type="binding site" evidence="1">
    <location>
        <position position="204"/>
    </location>
    <ligand>
        <name>a divalent metal cation</name>
        <dbReference type="ChEBI" id="CHEBI:60240"/>
    </ligand>
</feature>